<sequence length="939" mass="103960">MPAVSKGDGMRGLAVFISDIRNCKSKEAEIKRINKELANIRSKFKGDKALDGYSKKKYVCKLLFIFLLGHDIDFGHMEAVNLLSSNRYTEKQIGYLFISVLVNSNSELIRLINNAIKNDLASRNPTFMGLALHCIASVGSREMAEAFAGEIPKVLVAGDTMDSVKQSAALCLLRLYRTSPDLVPMGDWTSRVVHLLNDQHLGVVTAATSLITTLAQKNPEEFKTSVSLAVSRLSRIVTSASTDLQDYTYYFVPAPWLSVKLLRLLQCYPPPDPAVRGRLTECLETILNKAQEPPKSKKVQHSNAKNAVLFEAISLIIHHDSEPNLLVRACNQLGQFLQHRETNLRYLALESMCTLASSEFSHEAVKTHIETVINALKTERDVSVRQRAVDLLYAMCDRSNAPQIVAEMLSYLETADYSIREEIVLKVAILAEKYAVDYTWYVDTILNLIRIAGDYVSEEVWYRVIQIVINRDDVQGYAAKTVFEALQAPACHENLVKVGGYILGEFGNLIAGDPRSSPLIQFHLLHSKFHLCSVPTRALLLSTYIKFVNLFPEVKPTIQDVLRSDSQLRNADVELQQRAVEYLRLSTVASTDILATVLEEMPPFPERESSILAKLKKKKGPSTVTDLEDTKRDRSVDVNGGPEPAPASTSAVSTPSPSADLLGLGAAPPAPAGPPPSSGGSGLLVDVFSDSASVVAPLAPGSEDNFARFVCKNNGVLFENQLLQIGLKSEFRQNLGRMFIFYGNKTSTQFLNFTPTLICSDDLQPNLNLQTKPVDPTVEGGAQVQQVVNIECVSDFTEAPVLNIQFRYGGTFQNVSVQLPITLNKFFQPTEMASQDFFQRWKQLSNPQQEVQNIFKAKHPMDTEVTKAKIIGFGSALLEEVDPNPANFVGAGIIHTKTTQIGCLLRLEPNLQAQMYRLTLRTSKEAVSQRLCELLSAQF</sequence>
<dbReference type="EMBL" id="AB020706">
    <property type="protein sequence ID" value="BAA74922.2"/>
    <property type="molecule type" value="mRNA"/>
</dbReference>
<dbReference type="EMBL" id="AK223558">
    <property type="protein sequence ID" value="BAD97278.1"/>
    <property type="molecule type" value="mRNA"/>
</dbReference>
<dbReference type="EMBL" id="AK027891">
    <property type="protein sequence ID" value="BAB55435.1"/>
    <property type="molecule type" value="mRNA"/>
</dbReference>
<dbReference type="EMBL" id="BC006155">
    <property type="protein sequence ID" value="AAH06155.1"/>
    <property type="molecule type" value="mRNA"/>
</dbReference>
<dbReference type="EMBL" id="AF049527">
    <property type="protein sequence ID" value="AAC27505.1"/>
    <property type="molecule type" value="mRNA"/>
</dbReference>
<dbReference type="CCDS" id="CCDS44512.1">
    <molecule id="O94973-1"/>
</dbReference>
<dbReference type="CCDS" id="CCDS73234.1">
    <molecule id="O94973-2"/>
</dbReference>
<dbReference type="RefSeq" id="NP_001229766.1">
    <molecule id="O94973-2"/>
    <property type="nucleotide sequence ID" value="NM_001242837.2"/>
</dbReference>
<dbReference type="RefSeq" id="NP_036437.1">
    <molecule id="O94973-1"/>
    <property type="nucleotide sequence ID" value="NM_012305.4"/>
</dbReference>
<dbReference type="SMR" id="O94973"/>
<dbReference type="BioGRID" id="106670">
    <property type="interactions" value="199"/>
</dbReference>
<dbReference type="ComplexPortal" id="CPX-5150">
    <property type="entry name" value="AP-2 Adaptor complex, alpha2 variant"/>
</dbReference>
<dbReference type="ELM" id="O94973"/>
<dbReference type="FunCoup" id="O94973">
    <property type="interactions" value="2853"/>
</dbReference>
<dbReference type="IntAct" id="O94973">
    <property type="interactions" value="98"/>
</dbReference>
<dbReference type="MINT" id="O94973"/>
<dbReference type="STRING" id="9606.ENSP00000327694"/>
<dbReference type="TCDB" id="9.B.278.1.4">
    <property type="family name" value="the organellar-targeting adaptor protein complex (o-apc) family"/>
</dbReference>
<dbReference type="GlyGen" id="O94973">
    <property type="glycosylation" value="3 sites, 1 N-linked glycan (1 site), 1 O-linked glycan (1 site)"/>
</dbReference>
<dbReference type="iPTMnet" id="O94973"/>
<dbReference type="MetOSite" id="O94973"/>
<dbReference type="PhosphoSitePlus" id="O94973"/>
<dbReference type="SwissPalm" id="O94973"/>
<dbReference type="BioMuta" id="AP2A2"/>
<dbReference type="jPOST" id="O94973"/>
<dbReference type="MassIVE" id="O94973"/>
<dbReference type="PaxDb" id="9606-ENSP00000327694"/>
<dbReference type="PeptideAtlas" id="O94973"/>
<dbReference type="ProteomicsDB" id="50592">
    <molecule id="O94973-1"/>
</dbReference>
<dbReference type="ProteomicsDB" id="50593">
    <molecule id="O94973-2"/>
</dbReference>
<dbReference type="ProteomicsDB" id="50594">
    <molecule id="O94973-3"/>
</dbReference>
<dbReference type="Pumba" id="O94973"/>
<dbReference type="Antibodypedia" id="4304">
    <property type="antibodies" value="212 antibodies from 32 providers"/>
</dbReference>
<dbReference type="DNASU" id="161"/>
<dbReference type="Ensembl" id="ENST00000332231.9">
    <molecule id="O94973-2"/>
    <property type="protein sequence ID" value="ENSP00000327694.5"/>
    <property type="gene ID" value="ENSG00000183020.15"/>
</dbReference>
<dbReference type="Ensembl" id="ENST00000448903.7">
    <molecule id="O94973-1"/>
    <property type="protein sequence ID" value="ENSP00000413234.3"/>
    <property type="gene ID" value="ENSG00000183020.15"/>
</dbReference>
<dbReference type="Ensembl" id="ENST00000528815.5">
    <molecule id="O94973-3"/>
    <property type="protein sequence ID" value="ENSP00000431630.1"/>
    <property type="gene ID" value="ENSG00000183020.15"/>
</dbReference>
<dbReference type="GeneID" id="161"/>
<dbReference type="KEGG" id="hsa:161"/>
<dbReference type="MANE-Select" id="ENST00000448903.7">
    <property type="protein sequence ID" value="ENSP00000413234.3"/>
    <property type="RefSeq nucleotide sequence ID" value="NM_012305.4"/>
    <property type="RefSeq protein sequence ID" value="NP_036437.1"/>
</dbReference>
<dbReference type="UCSC" id="uc001lss.4">
    <molecule id="O94973-1"/>
    <property type="organism name" value="human"/>
</dbReference>
<dbReference type="AGR" id="HGNC:562"/>
<dbReference type="CTD" id="161"/>
<dbReference type="DisGeNET" id="161"/>
<dbReference type="GeneCards" id="AP2A2"/>
<dbReference type="HGNC" id="HGNC:562">
    <property type="gene designation" value="AP2A2"/>
</dbReference>
<dbReference type="HPA" id="ENSG00000183020">
    <property type="expression patterns" value="Tissue enhanced (brain)"/>
</dbReference>
<dbReference type="MIM" id="607242">
    <property type="type" value="gene"/>
</dbReference>
<dbReference type="neXtProt" id="NX_O94973"/>
<dbReference type="OpenTargets" id="ENSG00000183020"/>
<dbReference type="PharmGKB" id="PA24853"/>
<dbReference type="VEuPathDB" id="HostDB:ENSG00000183020"/>
<dbReference type="eggNOG" id="KOG1077">
    <property type="taxonomic scope" value="Eukaryota"/>
</dbReference>
<dbReference type="GeneTree" id="ENSGT00950000182838"/>
<dbReference type="HOGENOM" id="CLU_003824_1_0_1"/>
<dbReference type="InParanoid" id="O94973"/>
<dbReference type="OMA" id="GYVYYGV"/>
<dbReference type="OrthoDB" id="413467at2759"/>
<dbReference type="PAN-GO" id="O94973">
    <property type="GO annotations" value="3 GO annotations based on evolutionary models"/>
</dbReference>
<dbReference type="PhylomeDB" id="O94973"/>
<dbReference type="TreeFam" id="TF300308"/>
<dbReference type="PathwayCommons" id="O94973"/>
<dbReference type="Reactome" id="R-HSA-167590">
    <property type="pathway name" value="Nef Mediated CD4 Down-regulation"/>
</dbReference>
<dbReference type="Reactome" id="R-HSA-177504">
    <property type="pathway name" value="Retrograde neurotrophin signalling"/>
</dbReference>
<dbReference type="Reactome" id="R-HSA-182218">
    <property type="pathway name" value="Nef Mediated CD8 Down-regulation"/>
</dbReference>
<dbReference type="Reactome" id="R-HSA-2132295">
    <property type="pathway name" value="MHC class II antigen presentation"/>
</dbReference>
<dbReference type="Reactome" id="R-HSA-3928665">
    <property type="pathway name" value="EPH-ephrin mediated repulsion of cells"/>
</dbReference>
<dbReference type="Reactome" id="R-HSA-416993">
    <molecule id="O94973-3"/>
    <property type="pathway name" value="Trafficking of GluR2-containing AMPA receptors"/>
</dbReference>
<dbReference type="Reactome" id="R-HSA-437239">
    <property type="pathway name" value="Recycling pathway of L1"/>
</dbReference>
<dbReference type="Reactome" id="R-HSA-5099900">
    <property type="pathway name" value="WNT5A-dependent internalization of FZD4"/>
</dbReference>
<dbReference type="Reactome" id="R-HSA-5140745">
    <property type="pathway name" value="WNT5A-dependent internalization of FZD2, FZD5 and ROR2"/>
</dbReference>
<dbReference type="Reactome" id="R-HSA-6798695">
    <property type="pathway name" value="Neutrophil degranulation"/>
</dbReference>
<dbReference type="Reactome" id="R-HSA-8856825">
    <property type="pathway name" value="Cargo recognition for clathrin-mediated endocytosis"/>
</dbReference>
<dbReference type="Reactome" id="R-HSA-8856828">
    <property type="pathway name" value="Clathrin-mediated endocytosis"/>
</dbReference>
<dbReference type="Reactome" id="R-HSA-8866427">
    <property type="pathway name" value="VLDLR internalisation and degradation"/>
</dbReference>
<dbReference type="Reactome" id="R-HSA-8964038">
    <property type="pathway name" value="LDL clearance"/>
</dbReference>
<dbReference type="Reactome" id="R-HSA-9679191">
    <property type="pathway name" value="Potential therapeutics for SARS"/>
</dbReference>
<dbReference type="SignaLink" id="O94973"/>
<dbReference type="SIGNOR" id="O94973"/>
<dbReference type="BioGRID-ORCS" id="161">
    <property type="hits" value="15 hits in 1161 CRISPR screens"/>
</dbReference>
<dbReference type="CD-CODE" id="FB4E32DD">
    <property type="entry name" value="Presynaptic clusters and postsynaptic densities"/>
</dbReference>
<dbReference type="ChiTaRS" id="AP2A2">
    <property type="organism name" value="human"/>
</dbReference>
<dbReference type="GeneWiki" id="AP2A2"/>
<dbReference type="GenomeRNAi" id="161"/>
<dbReference type="Pharos" id="O94973">
    <property type="development level" value="Tbio"/>
</dbReference>
<dbReference type="PRO" id="PR:O94973"/>
<dbReference type="Proteomes" id="UP000005640">
    <property type="component" value="Chromosome 11"/>
</dbReference>
<dbReference type="RNAct" id="O94973">
    <property type="molecule type" value="protein"/>
</dbReference>
<dbReference type="Bgee" id="ENSG00000183020">
    <property type="expression patterns" value="Expressed in right hemisphere of cerebellum and 95 other cell types or tissues"/>
</dbReference>
<dbReference type="ExpressionAtlas" id="O94973">
    <property type="expression patterns" value="baseline and differential"/>
</dbReference>
<dbReference type="GO" id="GO:0030122">
    <property type="term" value="C:AP-2 adaptor complex"/>
    <property type="evidence" value="ECO:0000314"/>
    <property type="project" value="UniProtKB"/>
</dbReference>
<dbReference type="GO" id="GO:0045334">
    <property type="term" value="C:clathrin-coated endocytic vesicle"/>
    <property type="evidence" value="ECO:0000303"/>
    <property type="project" value="ARUK-UCL"/>
</dbReference>
<dbReference type="GO" id="GO:0030669">
    <property type="term" value="C:clathrin-coated endocytic vesicle membrane"/>
    <property type="evidence" value="ECO:0000304"/>
    <property type="project" value="Reactome"/>
</dbReference>
<dbReference type="GO" id="GO:0009898">
    <property type="term" value="C:cytoplasmic side of plasma membrane"/>
    <property type="evidence" value="ECO:0000303"/>
    <property type="project" value="ComplexPortal"/>
</dbReference>
<dbReference type="GO" id="GO:0031410">
    <property type="term" value="C:cytoplasmic vesicle"/>
    <property type="evidence" value="ECO:0000250"/>
    <property type="project" value="BHF-UCL"/>
</dbReference>
<dbReference type="GO" id="GO:0005829">
    <property type="term" value="C:cytosol"/>
    <property type="evidence" value="ECO:0000304"/>
    <property type="project" value="Reactome"/>
</dbReference>
<dbReference type="GO" id="GO:0030666">
    <property type="term" value="C:endocytic vesicle membrane"/>
    <property type="evidence" value="ECO:0000304"/>
    <property type="project" value="Reactome"/>
</dbReference>
<dbReference type="GO" id="GO:0036020">
    <property type="term" value="C:endolysosome membrane"/>
    <property type="evidence" value="ECO:0000304"/>
    <property type="project" value="Reactome"/>
</dbReference>
<dbReference type="GO" id="GO:0101003">
    <property type="term" value="C:ficolin-1-rich granule membrane"/>
    <property type="evidence" value="ECO:0000304"/>
    <property type="project" value="Reactome"/>
</dbReference>
<dbReference type="GO" id="GO:0005886">
    <property type="term" value="C:plasma membrane"/>
    <property type="evidence" value="ECO:0000304"/>
    <property type="project" value="Reactome"/>
</dbReference>
<dbReference type="GO" id="GO:0098794">
    <property type="term" value="C:postsynapse"/>
    <property type="evidence" value="ECO:0007669"/>
    <property type="project" value="GOC"/>
</dbReference>
<dbReference type="GO" id="GO:0098793">
    <property type="term" value="C:presynapse"/>
    <property type="evidence" value="ECO:0007669"/>
    <property type="project" value="GOC"/>
</dbReference>
<dbReference type="GO" id="GO:0030667">
    <property type="term" value="C:secretory granule membrane"/>
    <property type="evidence" value="ECO:0000304"/>
    <property type="project" value="Reactome"/>
</dbReference>
<dbReference type="GO" id="GO:0035615">
    <property type="term" value="F:clathrin adaptor activity"/>
    <property type="evidence" value="ECO:0000318"/>
    <property type="project" value="GO_Central"/>
</dbReference>
<dbReference type="GO" id="GO:0097718">
    <property type="term" value="F:disordered domain specific binding"/>
    <property type="evidence" value="ECO:0007669"/>
    <property type="project" value="Ensembl"/>
</dbReference>
<dbReference type="GO" id="GO:0008289">
    <property type="term" value="F:lipid binding"/>
    <property type="evidence" value="ECO:0007669"/>
    <property type="project" value="UniProtKB-KW"/>
</dbReference>
<dbReference type="GO" id="GO:0019901">
    <property type="term" value="F:protein kinase binding"/>
    <property type="evidence" value="ECO:0000250"/>
    <property type="project" value="ParkinsonsUK-UCL"/>
</dbReference>
<dbReference type="GO" id="GO:0072583">
    <property type="term" value="P:clathrin-dependent endocytosis"/>
    <property type="evidence" value="ECO:0000314"/>
    <property type="project" value="UniProtKB"/>
</dbReference>
<dbReference type="GO" id="GO:0006886">
    <property type="term" value="P:intracellular protein transport"/>
    <property type="evidence" value="ECO:0007669"/>
    <property type="project" value="InterPro"/>
</dbReference>
<dbReference type="GO" id="GO:0098884">
    <property type="term" value="P:postsynaptic neurotransmitter receptor internalization"/>
    <property type="evidence" value="ECO:0000303"/>
    <property type="project" value="ComplexPortal"/>
</dbReference>
<dbReference type="GO" id="GO:0048488">
    <property type="term" value="P:synaptic vesicle endocytosis"/>
    <property type="evidence" value="ECO:0007669"/>
    <property type="project" value="Ensembl"/>
</dbReference>
<dbReference type="GO" id="GO:0016192">
    <property type="term" value="P:vesicle-mediated transport"/>
    <property type="evidence" value="ECO:0000303"/>
    <property type="project" value="ComplexPortal"/>
</dbReference>
<dbReference type="FunFam" id="1.25.10.10:FF:000020">
    <property type="entry name" value="AP-2 complex subunit alpha"/>
    <property type="match status" value="1"/>
</dbReference>
<dbReference type="FunFam" id="2.60.40.1230:FF:000003">
    <property type="entry name" value="AP-2 complex subunit alpha"/>
    <property type="match status" value="1"/>
</dbReference>
<dbReference type="FunFam" id="3.30.310.10:FF:000004">
    <property type="entry name" value="AP-2 complex subunit alpha"/>
    <property type="match status" value="1"/>
</dbReference>
<dbReference type="Gene3D" id="2.60.40.1230">
    <property type="match status" value="1"/>
</dbReference>
<dbReference type="Gene3D" id="1.25.10.10">
    <property type="entry name" value="Leucine-rich Repeat Variant"/>
    <property type="match status" value="1"/>
</dbReference>
<dbReference type="Gene3D" id="3.30.310.10">
    <property type="entry name" value="TATA-Binding Protein"/>
    <property type="match status" value="1"/>
</dbReference>
<dbReference type="InterPro" id="IPR050840">
    <property type="entry name" value="Adaptor_Complx_Large_Subunit"/>
</dbReference>
<dbReference type="InterPro" id="IPR017104">
    <property type="entry name" value="AP2_complex_asu"/>
</dbReference>
<dbReference type="InterPro" id="IPR011989">
    <property type="entry name" value="ARM-like"/>
</dbReference>
<dbReference type="InterPro" id="IPR016024">
    <property type="entry name" value="ARM-type_fold"/>
</dbReference>
<dbReference type="InterPro" id="IPR002553">
    <property type="entry name" value="Clathrin/coatomer_adapt-like_N"/>
</dbReference>
<dbReference type="InterPro" id="IPR003164">
    <property type="entry name" value="Clathrin_a-adaptin_app_sub_C"/>
</dbReference>
<dbReference type="InterPro" id="IPR008152">
    <property type="entry name" value="Clathrin_a/b/g-adaptin_app_Ig"/>
</dbReference>
<dbReference type="InterPro" id="IPR013041">
    <property type="entry name" value="Clathrin_app_Ig-like_sf"/>
</dbReference>
<dbReference type="InterPro" id="IPR009028">
    <property type="entry name" value="Coatomer/calthrin_app_sub_C"/>
</dbReference>
<dbReference type="InterPro" id="IPR012295">
    <property type="entry name" value="TBP_dom_sf"/>
</dbReference>
<dbReference type="PANTHER" id="PTHR22780">
    <property type="entry name" value="ADAPTIN, ALPHA/GAMMA/EPSILON"/>
    <property type="match status" value="1"/>
</dbReference>
<dbReference type="Pfam" id="PF01602">
    <property type="entry name" value="Adaptin_N"/>
    <property type="match status" value="1"/>
</dbReference>
<dbReference type="Pfam" id="PF02296">
    <property type="entry name" value="Alpha_adaptin_C"/>
    <property type="match status" value="1"/>
</dbReference>
<dbReference type="Pfam" id="PF02883">
    <property type="entry name" value="Alpha_adaptinC2"/>
    <property type="match status" value="1"/>
</dbReference>
<dbReference type="PIRSF" id="PIRSF037091">
    <property type="entry name" value="AP2_complex_alpha"/>
    <property type="match status" value="1"/>
</dbReference>
<dbReference type="SMART" id="SM00809">
    <property type="entry name" value="Alpha_adaptinC2"/>
    <property type="match status" value="1"/>
</dbReference>
<dbReference type="SUPFAM" id="SSF48371">
    <property type="entry name" value="ARM repeat"/>
    <property type="match status" value="1"/>
</dbReference>
<dbReference type="SUPFAM" id="SSF49348">
    <property type="entry name" value="Clathrin adaptor appendage domain"/>
    <property type="match status" value="1"/>
</dbReference>
<dbReference type="SUPFAM" id="SSF55711">
    <property type="entry name" value="Subdomain of clathrin and coatomer appendage domain"/>
    <property type="match status" value="1"/>
</dbReference>
<proteinExistence type="evidence at protein level"/>
<feature type="chain" id="PRO_0000193732" description="AP-2 complex subunit alpha-2">
    <location>
        <begin position="1"/>
        <end position="939"/>
    </location>
</feature>
<feature type="region of interest" description="Disordered" evidence="4">
    <location>
        <begin position="612"/>
        <end position="681"/>
    </location>
</feature>
<feature type="compositionally biased region" description="Low complexity" evidence="4">
    <location>
        <begin position="646"/>
        <end position="667"/>
    </location>
</feature>
<feature type="compositionally biased region" description="Pro residues" evidence="4">
    <location>
        <begin position="668"/>
        <end position="677"/>
    </location>
</feature>
<feature type="binding site" evidence="3">
    <location>
        <begin position="11"/>
        <end position="12"/>
    </location>
    <ligand>
        <name>a 1,2-diacyl-sn-glycero-3-phospho-(1D-myo-inositol-3,4,5-trisphosphate)</name>
        <dbReference type="ChEBI" id="CHEBI:57836"/>
    </ligand>
</feature>
<feature type="binding site" evidence="3">
    <location>
        <position position="43"/>
    </location>
    <ligand>
        <name>a 1,2-diacyl-sn-glycero-3-phospho-(1D-myo-inositol-3,4,5-trisphosphate)</name>
        <dbReference type="ChEBI" id="CHEBI:57836"/>
    </ligand>
</feature>
<feature type="binding site" evidence="3">
    <location>
        <position position="53"/>
    </location>
    <ligand>
        <name>a 1,2-diacyl-sn-glycero-3-phospho-(1D-myo-inositol-3,4,5-trisphosphate)</name>
        <dbReference type="ChEBI" id="CHEBI:57836"/>
    </ligand>
</feature>
<feature type="binding site" evidence="3">
    <location>
        <begin position="57"/>
        <end position="61"/>
    </location>
    <ligand>
        <name>a 1,2-diacyl-sn-glycero-3-phospho-(1D-myo-inositol-3,4,5-trisphosphate)</name>
        <dbReference type="ChEBI" id="CHEBI:57836"/>
    </ligand>
</feature>
<feature type="splice variant" id="VSP_035762" description="In isoform 2 and isoform 3." evidence="16 17">
    <original>P</original>
    <variation>PE</variation>
    <location>
        <position position="271"/>
    </location>
</feature>
<feature type="splice variant" id="VSP_035763" description="In isoform 3." evidence="16">
    <original>STP</original>
    <variation>VCL</variation>
    <location>
        <begin position="653"/>
        <end position="655"/>
    </location>
</feature>
<feature type="splice variant" id="VSP_035764" description="In isoform 3." evidence="16">
    <location>
        <begin position="656"/>
        <end position="939"/>
    </location>
</feature>
<feature type="sequence conflict" description="In Ref. 4; BAB55435." evidence="18" ref="4">
    <original>I</original>
    <variation>T</variation>
    <location>
        <position position="20"/>
    </location>
</feature>
<feature type="sequence conflict" description="In Ref. 6; AAC27505." evidence="18" ref="6">
    <original>R</original>
    <variation>Q</variation>
    <location>
        <position position="450"/>
    </location>
</feature>
<protein>
    <recommendedName>
        <fullName evidence="18">AP-2 complex subunit alpha-2</fullName>
    </recommendedName>
    <alternativeName>
        <fullName>100 kDa coated vesicle protein C</fullName>
    </alternativeName>
    <alternativeName>
        <fullName>Adaptor protein complex AP-2 subunit alpha-2</fullName>
    </alternativeName>
    <alternativeName>
        <fullName>Adaptor-related protein complex 2 subunit alpha-2</fullName>
    </alternativeName>
    <alternativeName>
        <fullName>Alpha-adaptin C</fullName>
    </alternativeName>
    <alternativeName>
        <fullName>Alpha2-adaptin</fullName>
    </alternativeName>
    <alternativeName>
        <fullName>Clathrin assembly protein complex 2 alpha-C large chain</fullName>
    </alternativeName>
    <alternativeName>
        <fullName>Huntingtin yeast partner J</fullName>
    </alternativeName>
    <alternativeName>
        <fullName>Huntingtin-interacting protein 9</fullName>
        <shortName>HIP-9</shortName>
    </alternativeName>
    <alternativeName>
        <fullName>Huntingtin-interacting protein J</fullName>
    </alternativeName>
    <alternativeName>
        <fullName>Plasma membrane adaptor HA2/AP2 adaptin alpha C subunit</fullName>
    </alternativeName>
</protein>
<reference key="1">
    <citation type="journal article" date="1998" name="DNA Res.">
        <title>Prediction of the coding sequences of unidentified human genes. XII. The complete sequences of 100 new cDNA clones from brain which code for large proteins in vitro.</title>
        <authorList>
            <person name="Nagase T."/>
            <person name="Ishikawa K."/>
            <person name="Suyama M."/>
            <person name="Kikuno R."/>
            <person name="Hirosawa M."/>
            <person name="Miyajima N."/>
            <person name="Tanaka A."/>
            <person name="Kotani H."/>
            <person name="Nomura N."/>
            <person name="Ohara O."/>
        </authorList>
    </citation>
    <scope>NUCLEOTIDE SEQUENCE [LARGE SCALE MRNA] (ISOFORM 1)</scope>
    <source>
        <tissue>Brain</tissue>
    </source>
</reference>
<reference key="2">
    <citation type="journal article" date="2002" name="DNA Res.">
        <title>Construction of expression-ready cDNA clones for KIAA genes: manual curation of 330 KIAA cDNA clones.</title>
        <authorList>
            <person name="Nakajima D."/>
            <person name="Okazaki N."/>
            <person name="Yamakawa H."/>
            <person name="Kikuno R."/>
            <person name="Ohara O."/>
            <person name="Nagase T."/>
        </authorList>
    </citation>
    <scope>SEQUENCE REVISION</scope>
</reference>
<reference key="3">
    <citation type="submission" date="2005-04" db="EMBL/GenBank/DDBJ databases">
        <authorList>
            <person name="Totoki Y."/>
            <person name="Toyoda A."/>
            <person name="Takeda T."/>
            <person name="Sakaki Y."/>
            <person name="Tanaka A."/>
            <person name="Yokoyama S."/>
        </authorList>
    </citation>
    <scope>NUCLEOTIDE SEQUENCE [LARGE SCALE MRNA] (ISOFORM 2)</scope>
    <source>
        <tissue>Brain</tissue>
    </source>
</reference>
<reference key="4">
    <citation type="journal article" date="2004" name="Nat. Genet.">
        <title>Complete sequencing and characterization of 21,243 full-length human cDNAs.</title>
        <authorList>
            <person name="Ota T."/>
            <person name="Suzuki Y."/>
            <person name="Nishikawa T."/>
            <person name="Otsuki T."/>
            <person name="Sugiyama T."/>
            <person name="Irie R."/>
            <person name="Wakamatsu A."/>
            <person name="Hayashi K."/>
            <person name="Sato H."/>
            <person name="Nagai K."/>
            <person name="Kimura K."/>
            <person name="Makita H."/>
            <person name="Sekine M."/>
            <person name="Obayashi M."/>
            <person name="Nishi T."/>
            <person name="Shibahara T."/>
            <person name="Tanaka T."/>
            <person name="Ishii S."/>
            <person name="Yamamoto J."/>
            <person name="Saito K."/>
            <person name="Kawai Y."/>
            <person name="Isono Y."/>
            <person name="Nakamura Y."/>
            <person name="Nagahari K."/>
            <person name="Murakami K."/>
            <person name="Yasuda T."/>
            <person name="Iwayanagi T."/>
            <person name="Wagatsuma M."/>
            <person name="Shiratori A."/>
            <person name="Sudo H."/>
            <person name="Hosoiri T."/>
            <person name="Kaku Y."/>
            <person name="Kodaira H."/>
            <person name="Kondo H."/>
            <person name="Sugawara M."/>
            <person name="Takahashi M."/>
            <person name="Kanda K."/>
            <person name="Yokoi T."/>
            <person name="Furuya T."/>
            <person name="Kikkawa E."/>
            <person name="Omura Y."/>
            <person name="Abe K."/>
            <person name="Kamihara K."/>
            <person name="Katsuta N."/>
            <person name="Sato K."/>
            <person name="Tanikawa M."/>
            <person name="Yamazaki M."/>
            <person name="Ninomiya K."/>
            <person name="Ishibashi T."/>
            <person name="Yamashita H."/>
            <person name="Murakawa K."/>
            <person name="Fujimori K."/>
            <person name="Tanai H."/>
            <person name="Kimata M."/>
            <person name="Watanabe M."/>
            <person name="Hiraoka S."/>
            <person name="Chiba Y."/>
            <person name="Ishida S."/>
            <person name="Ono Y."/>
            <person name="Takiguchi S."/>
            <person name="Watanabe S."/>
            <person name="Yosida M."/>
            <person name="Hotuta T."/>
            <person name="Kusano J."/>
            <person name="Kanehori K."/>
            <person name="Takahashi-Fujii A."/>
            <person name="Hara H."/>
            <person name="Tanase T.-O."/>
            <person name="Nomura Y."/>
            <person name="Togiya S."/>
            <person name="Komai F."/>
            <person name="Hara R."/>
            <person name="Takeuchi K."/>
            <person name="Arita M."/>
            <person name="Imose N."/>
            <person name="Musashino K."/>
            <person name="Yuuki H."/>
            <person name="Oshima A."/>
            <person name="Sasaki N."/>
            <person name="Aotsuka S."/>
            <person name="Yoshikawa Y."/>
            <person name="Matsunawa H."/>
            <person name="Ichihara T."/>
            <person name="Shiohata N."/>
            <person name="Sano S."/>
            <person name="Moriya S."/>
            <person name="Momiyama H."/>
            <person name="Satoh N."/>
            <person name="Takami S."/>
            <person name="Terashima Y."/>
            <person name="Suzuki O."/>
            <person name="Nakagawa S."/>
            <person name="Senoh A."/>
            <person name="Mizoguchi H."/>
            <person name="Goto Y."/>
            <person name="Shimizu F."/>
            <person name="Wakebe H."/>
            <person name="Hishigaki H."/>
            <person name="Watanabe T."/>
            <person name="Sugiyama A."/>
            <person name="Takemoto M."/>
            <person name="Kawakami B."/>
            <person name="Yamazaki M."/>
            <person name="Watanabe K."/>
            <person name="Kumagai A."/>
            <person name="Itakura S."/>
            <person name="Fukuzumi Y."/>
            <person name="Fujimori Y."/>
            <person name="Komiyama M."/>
            <person name="Tashiro H."/>
            <person name="Tanigami A."/>
            <person name="Fujiwara T."/>
            <person name="Ono T."/>
            <person name="Yamada K."/>
            <person name="Fujii Y."/>
            <person name="Ozaki K."/>
            <person name="Hirao M."/>
            <person name="Ohmori Y."/>
            <person name="Kawabata A."/>
            <person name="Hikiji T."/>
            <person name="Kobatake N."/>
            <person name="Inagaki H."/>
            <person name="Ikema Y."/>
            <person name="Okamoto S."/>
            <person name="Okitani R."/>
            <person name="Kawakami T."/>
            <person name="Noguchi S."/>
            <person name="Itoh T."/>
            <person name="Shigeta K."/>
            <person name="Senba T."/>
            <person name="Matsumura K."/>
            <person name="Nakajima Y."/>
            <person name="Mizuno T."/>
            <person name="Morinaga M."/>
            <person name="Sasaki M."/>
            <person name="Togashi T."/>
            <person name="Oyama M."/>
            <person name="Hata H."/>
            <person name="Watanabe M."/>
            <person name="Komatsu T."/>
            <person name="Mizushima-Sugano J."/>
            <person name="Satoh T."/>
            <person name="Shirai Y."/>
            <person name="Takahashi Y."/>
            <person name="Nakagawa K."/>
            <person name="Okumura K."/>
            <person name="Nagase T."/>
            <person name="Nomura N."/>
            <person name="Kikuchi H."/>
            <person name="Masuho Y."/>
            <person name="Yamashita R."/>
            <person name="Nakai K."/>
            <person name="Yada T."/>
            <person name="Nakamura Y."/>
            <person name="Ohara O."/>
            <person name="Isogai T."/>
            <person name="Sugano S."/>
        </authorList>
    </citation>
    <scope>NUCLEOTIDE SEQUENCE [LARGE SCALE MRNA] (ISOFORM 3)</scope>
</reference>
<reference key="5">
    <citation type="journal article" date="2004" name="Genome Res.">
        <title>The status, quality, and expansion of the NIH full-length cDNA project: the Mammalian Gene Collection (MGC).</title>
        <authorList>
            <consortium name="The MGC Project Team"/>
        </authorList>
    </citation>
    <scope>NUCLEOTIDE SEQUENCE [LARGE SCALE MRNA] (ISOFORM 1)</scope>
    <source>
        <tissue>Brain</tissue>
    </source>
</reference>
<reference key="6">
    <citation type="journal article" date="1998" name="Hum. Mol. Genet.">
        <title>Huntingtin interacts with a family of WW domain proteins.</title>
        <authorList>
            <person name="Faber P.W."/>
            <person name="Barnes G.T."/>
            <person name="Srinidhi J."/>
            <person name="Chen J."/>
            <person name="Gusella J.F."/>
            <person name="MacDonald M.E."/>
        </authorList>
    </citation>
    <scope>NUCLEOTIDE SEQUENCE [MRNA] OF 318-476</scope>
    <source>
        <tissue>Testis</tissue>
    </source>
</reference>
<reference key="7">
    <citation type="journal article" date="2001" name="Hum. Mol. Genet.">
        <title>The huntingtin interacting protein HIP1 is a clathrin and alpha-adaptin-binding protein involved in receptor-mediated endocytosis.</title>
        <authorList>
            <person name="Waelter S."/>
            <person name="Scherzinger E."/>
            <person name="Hasenbank R."/>
            <person name="Nordhoff E."/>
            <person name="Lurz R."/>
            <person name="Goehler H."/>
            <person name="Gauss C."/>
            <person name="Sathasivam K."/>
            <person name="Bates G.P."/>
            <person name="Lehrach H."/>
            <person name="Wanker E.E."/>
        </authorList>
    </citation>
    <scope>INTERACTION WITH HIP1</scope>
</reference>
<reference key="8">
    <citation type="journal article" date="2003" name="Cell Struct. Funct.">
        <title>Adaptor protein complexes as the key regulators of protein sorting in the post-Golgi network.</title>
        <authorList>
            <person name="Nakatsu F."/>
            <person name="Ohno H."/>
        </authorList>
    </citation>
    <scope>FUNCTION OF THE AP-2 COMPLEX IN CLATHRIN-MEDIATED ENDOCYTOSIS</scope>
</reference>
<reference key="9">
    <citation type="journal article" date="2003" name="J. Biol. Chem.">
        <title>Effect of clathrin heavy chain- and alpha-adaptin-specific small inhibitory RNAs on endocytic accessory proteins and receptor trafficking in HeLa cells.</title>
        <authorList>
            <person name="Hinrichsen L."/>
            <person name="Harborth J."/>
            <person name="Andrees L."/>
            <person name="Weber K."/>
            <person name="Ungewickell E.J."/>
        </authorList>
    </citation>
    <scope>FUNCTION IN CLATHRIN-MEDIATED ENDOCYTOSIS</scope>
</reference>
<reference key="10">
    <citation type="journal article" date="2004" name="Annu. Rev. Cell Dev. Biol.">
        <title>Adaptors for clathrin coats: structure and function.</title>
        <authorList>
            <person name="Owen D.J."/>
            <person name="Collins B.M."/>
            <person name="Evans P.R."/>
        </authorList>
    </citation>
    <scope>FUNCTION OF THE AP-2 COMPLEX IN CLATHRIN-MEDIATED ENDOCYTOSIS</scope>
</reference>
<reference key="11">
    <citation type="journal article" date="2005" name="J. Biol. Chem.">
        <title>AP-1 and AP-3 facilitate lysosomal targeting of Batten disease protein CLN3 via its dileucine motif.</title>
        <authorList>
            <person name="Kyttaelae A."/>
            <person name="Yliannala K."/>
            <person name="Schu P."/>
            <person name="Jalanko A."/>
            <person name="Luzio J.P."/>
        </authorList>
    </citation>
    <scope>INTERACTION WITH CLN3</scope>
</reference>
<reference key="12">
    <citation type="journal article" date="2008" name="J. Cell Sci.">
        <title>The adaptor complex AP-2 regulates post-endocytic trafficking through the non-clathrin Arf6-dependent endocytic pathway.</title>
        <authorList>
            <person name="Lau A.W."/>
            <person name="Chou M.M."/>
        </authorList>
    </citation>
    <scope>FUNCTION OF THE AP-2 COMPLEX IN NON-CLATHRIN-DEPENDENT ENDOCYTOSIS</scope>
</reference>
<reference key="13">
    <citation type="journal article" date="2011" name="BMC Syst. Biol.">
        <title>Initial characterization of the human central proteome.</title>
        <authorList>
            <person name="Burkard T.R."/>
            <person name="Planyavsky M."/>
            <person name="Kaupe I."/>
            <person name="Breitwieser F.P."/>
            <person name="Buerckstuemmer T."/>
            <person name="Bennett K.L."/>
            <person name="Superti-Furga G."/>
            <person name="Colinge J."/>
        </authorList>
    </citation>
    <scope>IDENTIFICATION BY MASS SPECTROMETRY [LARGE SCALE ANALYSIS]</scope>
</reference>
<reference key="14">
    <citation type="journal article" date="2012" name="Hepatology">
        <title>AP2 adaptor complex mediates bile salt export pump internalization and modulates its hepatocanalicular expression and transport function.</title>
        <authorList>
            <person name="Hayashi H."/>
            <person name="Inamura K."/>
            <person name="Aida K."/>
            <person name="Naoi S."/>
            <person name="Horikawa R."/>
            <person name="Nagasaka H."/>
            <person name="Takatani T."/>
            <person name="Fukushima T."/>
            <person name="Hattori A."/>
            <person name="Yabuki T."/>
            <person name="Horii I."/>
            <person name="Sugiyama Y."/>
        </authorList>
    </citation>
    <scope>INTERACTION WITH ABCB11</scope>
</reference>
<reference key="15">
    <citation type="journal article" date="2012" name="Nat. Cell Biol.">
        <title>Distinct and separable activities of the endocytic clathrin-coat components Fcho1/2 and AP-2 in developmental patterning.</title>
        <authorList>
            <person name="Umasankar P.K."/>
            <person name="Sanker S."/>
            <person name="Thieman J.R."/>
            <person name="Chakraborty S."/>
            <person name="Wendland B."/>
            <person name="Tsang M."/>
            <person name="Traub L.M."/>
        </authorList>
    </citation>
    <scope>INTERACTION WITH FCHO1</scope>
</reference>
<reference key="16">
    <citation type="journal article" date="2013" name="J. Clin. Invest.">
        <title>Endocytosis of synaptic ADAM10 in neuronal plasticity and Alzheimer's disease.</title>
        <authorList>
            <person name="Marcello E."/>
            <person name="Saraceno C."/>
            <person name="Musardo S."/>
            <person name="Vara H."/>
            <person name="de la Fuente A.G."/>
            <person name="Pelucchi S."/>
            <person name="Di Marino D."/>
            <person name="Borroni B."/>
            <person name="Tramontano A."/>
            <person name="Perez-Otano I."/>
            <person name="Padovani A."/>
            <person name="Giustetto M."/>
            <person name="Gardoni F."/>
            <person name="Di Luca M."/>
        </authorList>
    </citation>
    <scope>FUNCTION</scope>
    <scope>INTERACTION WITH ADAM10</scope>
    <scope>TISSUE SPECIFICITY</scope>
</reference>
<reference key="17">
    <citation type="journal article" date="2013" name="Nature">
        <title>alphaTAT1 catalyses microtubule acetylation at clathrin-coated pits.</title>
        <authorList>
            <person name="Montagnac G."/>
            <person name="Meas-Yedid V."/>
            <person name="Irondelle M."/>
            <person name="Castro-Castro A."/>
            <person name="Franco M."/>
            <person name="Shida T."/>
            <person name="Nachury M.V."/>
            <person name="Benmerah A."/>
            <person name="Olivo-Marin J.C."/>
            <person name="Chavrier P."/>
        </authorList>
    </citation>
    <scope>INTERACTION WITH ATAT1</scope>
</reference>
<reference key="18">
    <citation type="journal article" date="2014" name="J. Proteomics">
        <title>An enzyme assisted RP-RPLC approach for in-depth analysis of human liver phosphoproteome.</title>
        <authorList>
            <person name="Bian Y."/>
            <person name="Song C."/>
            <person name="Cheng K."/>
            <person name="Dong M."/>
            <person name="Wang F."/>
            <person name="Huang J."/>
            <person name="Sun D."/>
            <person name="Wang L."/>
            <person name="Ye M."/>
            <person name="Zou H."/>
        </authorList>
    </citation>
    <scope>IDENTIFICATION BY MASS SPECTROMETRY [LARGE SCALE ANALYSIS]</scope>
    <source>
        <tissue>Liver</tissue>
    </source>
</reference>
<reference key="19">
    <citation type="journal article" date="2017" name="Cell Rep.">
        <title>APache is an AP2-interacting protein involved in synaptic vesicle trafficking and neuronal development.</title>
        <authorList>
            <person name="Piccini A."/>
            <person name="Castroflorio E."/>
            <person name="Valente P."/>
            <person name="Guarnieri F.C."/>
            <person name="Aprile D."/>
            <person name="Michetti C."/>
            <person name="Bramini M."/>
            <person name="Giansante G."/>
            <person name="Pinto B."/>
            <person name="Savardi A."/>
            <person name="Cesca F."/>
            <person name="Bachi A."/>
            <person name="Cattaneo A."/>
            <person name="Wren J.D."/>
            <person name="Fassio A."/>
            <person name="Valtorta F."/>
            <person name="Benfenati F."/>
            <person name="Giovedi S."/>
        </authorList>
    </citation>
    <scope>INTERACTION WITH KIAA1107</scope>
</reference>
<name>AP2A2_HUMAN</name>
<evidence type="ECO:0000250" key="1"/>
<evidence type="ECO:0000250" key="2">
    <source>
        <dbReference type="UniProtKB" id="P17427"/>
    </source>
</evidence>
<evidence type="ECO:0000250" key="3">
    <source>
        <dbReference type="UniProtKB" id="P18484"/>
    </source>
</evidence>
<evidence type="ECO:0000256" key="4">
    <source>
        <dbReference type="SAM" id="MobiDB-lite"/>
    </source>
</evidence>
<evidence type="ECO:0000269" key="5">
    <source>
    </source>
</evidence>
<evidence type="ECO:0000269" key="6">
    <source>
    </source>
</evidence>
<evidence type="ECO:0000269" key="7">
    <source>
    </source>
</evidence>
<evidence type="ECO:0000269" key="8">
    <source>
    </source>
</evidence>
<evidence type="ECO:0000269" key="9">
    <source>
    </source>
</evidence>
<evidence type="ECO:0000269" key="10">
    <source>
    </source>
</evidence>
<evidence type="ECO:0000269" key="11">
    <source>
    </source>
</evidence>
<evidence type="ECO:0000269" key="12">
    <source>
    </source>
</evidence>
<evidence type="ECO:0000269" key="13">
    <source>
    </source>
</evidence>
<evidence type="ECO:0000269" key="14">
    <source>
    </source>
</evidence>
<evidence type="ECO:0000269" key="15">
    <source>
    </source>
</evidence>
<evidence type="ECO:0000303" key="16">
    <source>
    </source>
</evidence>
<evidence type="ECO:0000303" key="17">
    <source ref="3"/>
</evidence>
<evidence type="ECO:0000305" key="18"/>
<accession>O94973</accession>
<accession>O75403</accession>
<accession>Q53ET1</accession>
<accession>Q96SI8</accession>
<keyword id="KW-0025">Alternative splicing</keyword>
<keyword id="KW-1003">Cell membrane</keyword>
<keyword id="KW-0168">Coated pit</keyword>
<keyword id="KW-0254">Endocytosis</keyword>
<keyword id="KW-0446">Lipid-binding</keyword>
<keyword id="KW-0472">Membrane</keyword>
<keyword id="KW-0653">Protein transport</keyword>
<keyword id="KW-1267">Proteomics identification</keyword>
<keyword id="KW-1185">Reference proteome</keyword>
<keyword id="KW-0813">Transport</keyword>
<comment type="function">
    <text evidence="1 6 7 8 10 13">Component of the adaptor protein complex 2 (AP-2). Adaptor protein complexes function in protein transport via transport vesicles in different membrane traffic pathways. Adaptor protein complexes are vesicle coat components and appear to be involved in cargo selection and vesicle formation. AP-2 is involved in clathrin-dependent endocytosis in which cargo proteins are incorporated into vesicles surrounded by clathrin (clathrin-coated vesicles, CCVs) which are destined for fusion with the early endosome. The clathrin lattice serves as a mechanical scaffold but is itself unable to bind directly to membrane components. Clathrin-associated adaptor protein (AP) complexes which can bind directly to both the clathrin lattice and to the lipid and protein components of membranes are considered to be the major clathrin adaptors contributing the CCV formation. AP-2 also serves as a cargo receptor to selectively sort the membrane proteins involved in receptor-mediated endocytosis. AP-2 seems to play a role in the recycling of synaptic vesicle membranes from the presynaptic surface. AP-2 recognizes Y-X-X-[FILMV] (Y-X-X-Phi) and [ED]-X-X-X-L-[LI] endocytosis signal motifs within the cytosolic tails of transmembrane cargo molecules. AP-2 may also play a role in maintaining normal post-endocytic trafficking through the ARF6-regulated, non-clathrin pathway. During long-term potentiation in hippocampal neurons, AP-2 is responsible for the endocytosis of ADAM10 (PubMed:23676497). The AP-2 alpha subunit binds polyphosphoinositide-containing lipids, positioning AP-2 on the membrane. The AP-2 alpha subunit acts via its C-terminal appendage domain as a scaffolding platform for endocytic accessory proteins. The AP-2 alpha and AP-2 sigma subunits are thought to contribute to the recognition of the [ED]-X-X-X-L-[LI] motif (By similarity).</text>
</comment>
<comment type="subunit">
    <text evidence="2 5 9 11 12 13 14 15">Adaptor protein complex 2 (AP-2) is a heterotetramer composed of two large adaptins (alpha-type subunit AP2A1 or AP2A2 and beta-type subunit AP2B1), a medium adaptin (mu-type subunit AP2M1) and a small adaptin (sigma-type subunit AP2S1). Binds EPN1, EPS15, AMPH, SNAP91 and BIN1 (By similarity). Interacts with HIP1 (PubMed:11532990). Interacts with DGKD (By similarity). Interacts with DENND1A, DENND1B and DENND1C (By similarity). Interacts with FCHO1 and DAB2 (PubMed:22484487). Interacts with ATAT1; this interaction is required for efficient alpha-tubulin acetylation by ATAT1 (PubMed:24097348). Interacts with KIAA1107 (PubMed:29262337). Together with AP2B1 and AP2M1, it interacts with ADAM10; this interaction facilitates ADAM10 endocytosis from the plasma membrane during long-term potentiation in hippocampal neurons (PubMed:23676497). Interacts with CLN3 (via dileucine motif) (PubMed:15598649). Interacts with ABCB11; this interaction regulates cell membrane expression of ABCB11 through its internalization in a clathrin-dependent manner and its subsequent degradation (PubMed:22262466). Interacts with Cacfd1 (By similarity). Interacts with DNAJC6 (By similarity).</text>
</comment>
<comment type="interaction">
    <interactant intactId="EBI-1642835">
        <id>O94973</id>
    </interactant>
    <interactant intactId="EBI-719906">
        <id>Q6PD74</id>
        <label>AAGAB</label>
    </interactant>
    <organismsDiffer>false</organismsDiffer>
    <experiments>5</experiments>
</comment>
<comment type="interaction">
    <interactant intactId="EBI-1642835">
        <id>O94973</id>
    </interactant>
    <interactant intactId="EBI-1391846">
        <id>P98078</id>
        <label>Dab2</label>
    </interactant>
    <organismsDiffer>true</organismsDiffer>
    <experiments>2</experiments>
</comment>
<comment type="interaction">
    <interactant intactId="EBI-1642835">
        <id>O94973</id>
    </interactant>
    <interactant intactId="EBI-8603527">
        <id>Q61743</id>
        <label>Kcnj11</label>
    </interactant>
    <organismsDiffer>true</organismsDiffer>
    <experiments>2</experiments>
</comment>
<comment type="interaction">
    <interactant intactId="EBI-1642835">
        <id>O94973</id>
    </interactant>
    <interactant intactId="EBI-25475880">
        <id>PRO_0000449628</id>
        <label>rep</label>
        <dbReference type="UniProtKB" id="P0DTD1"/>
    </interactant>
    <organismsDiffer>true</organismsDiffer>
    <experiments>3</experiments>
</comment>
<comment type="subcellular location">
    <subcellularLocation>
        <location evidence="2">Cell membrane</location>
        <topology evidence="2">Peripheral membrane protein</topology>
        <orientation evidence="2">Cytoplasmic side</orientation>
    </subcellularLocation>
    <subcellularLocation>
        <location evidence="2">Membrane</location>
        <location evidence="2">Coated pit</location>
        <topology evidence="2">Peripheral membrane protein</topology>
        <orientation evidence="2">Cytoplasmic side</orientation>
    </subcellularLocation>
    <text evidence="2">AP-2 appears to be excluded from internalizing CCVs and to disengage from sites of endocytosis seconds before internalization of the nascent CCV.</text>
</comment>
<comment type="alternative products">
    <event type="alternative splicing"/>
    <isoform>
        <id>O94973-1</id>
        <name>1</name>
        <sequence type="displayed"/>
    </isoform>
    <isoform>
        <id>O94973-2</id>
        <name>2</name>
        <sequence type="described" ref="VSP_035762"/>
    </isoform>
    <isoform>
        <id>O94973-3</id>
        <name>3</name>
        <sequence type="described" ref="VSP_035762 VSP_035763 VSP_035764"/>
    </isoform>
</comment>
<comment type="tissue specificity">
    <text evidence="13">Expressed in the brain (at protein level).</text>
</comment>
<comment type="similarity">
    <text evidence="18">Belongs to the adaptor complexes large subunit family.</text>
</comment>
<organism>
    <name type="scientific">Homo sapiens</name>
    <name type="common">Human</name>
    <dbReference type="NCBI Taxonomy" id="9606"/>
    <lineage>
        <taxon>Eukaryota</taxon>
        <taxon>Metazoa</taxon>
        <taxon>Chordata</taxon>
        <taxon>Craniata</taxon>
        <taxon>Vertebrata</taxon>
        <taxon>Euteleostomi</taxon>
        <taxon>Mammalia</taxon>
        <taxon>Eutheria</taxon>
        <taxon>Euarchontoglires</taxon>
        <taxon>Primates</taxon>
        <taxon>Haplorrhini</taxon>
        <taxon>Catarrhini</taxon>
        <taxon>Hominidae</taxon>
        <taxon>Homo</taxon>
    </lineage>
</organism>
<gene>
    <name type="primary">AP2A2</name>
    <name type="synonym">ADTAB</name>
    <name type="synonym">CLAPA2</name>
    <name type="synonym">HIP9</name>
    <name type="synonym">HYPJ</name>
    <name type="synonym">KIAA0899</name>
</gene>